<organism>
    <name type="scientific">Salmonella typhimurium (strain LT2 / SGSC1412 / ATCC 700720)</name>
    <dbReference type="NCBI Taxonomy" id="99287"/>
    <lineage>
        <taxon>Bacteria</taxon>
        <taxon>Pseudomonadati</taxon>
        <taxon>Pseudomonadota</taxon>
        <taxon>Gammaproteobacteria</taxon>
        <taxon>Enterobacterales</taxon>
        <taxon>Enterobacteriaceae</taxon>
        <taxon>Salmonella</taxon>
    </lineage>
</organism>
<evidence type="ECO:0000250" key="1">
    <source>
        <dbReference type="UniProtKB" id="P0A9E0"/>
    </source>
</evidence>
<evidence type="ECO:0000255" key="2">
    <source>
        <dbReference type="PROSITE-ProRule" id="PRU00593"/>
    </source>
</evidence>
<evidence type="ECO:0000303" key="3">
    <source>
    </source>
</evidence>
<keyword id="KW-0010">Activator</keyword>
<keyword id="KW-0054">Arabinose catabolism</keyword>
<keyword id="KW-0119">Carbohydrate metabolism</keyword>
<keyword id="KW-0963">Cytoplasm</keyword>
<keyword id="KW-0238">DNA-binding</keyword>
<keyword id="KW-1185">Reference proteome</keyword>
<keyword id="KW-0678">Repressor</keyword>
<keyword id="KW-0804">Transcription</keyword>
<keyword id="KW-0805">Transcription regulation</keyword>
<name>ARAC_SALTY</name>
<comment type="function">
    <text evidence="1">Transcription factor that regulates the expression of several genes involved in the transport and metabolism of L-arabinose.</text>
</comment>
<comment type="subunit">
    <text evidence="1">Homodimer.</text>
</comment>
<comment type="subcellular location">
    <subcellularLocation>
        <location evidence="1">Cytoplasm</location>
    </subcellularLocation>
</comment>
<protein>
    <recommendedName>
        <fullName>Arabinose operon regulatory protein</fullName>
    </recommendedName>
</protein>
<reference key="1">
    <citation type="journal article" date="1982" name="Gene">
        <title>The nucleotide sequence of the araC regulatory gene in Salmonella typhimurium LT2.</title>
        <authorList>
            <person name="Clarke P."/>
            <person name="Lin H.-C."/>
            <person name="Wilcox G."/>
        </authorList>
    </citation>
    <scope>NUCLEOTIDE SEQUENCE [GENOMIC DNA]</scope>
    <source>
        <strain>LT2</strain>
    </source>
</reference>
<reference key="2">
    <citation type="journal article" date="2001" name="Nature">
        <title>Complete genome sequence of Salmonella enterica serovar Typhimurium LT2.</title>
        <authorList>
            <person name="McClelland M."/>
            <person name="Sanderson K.E."/>
            <person name="Spieth J."/>
            <person name="Clifton S.W."/>
            <person name="Latreille P."/>
            <person name="Courtney L."/>
            <person name="Porwollik S."/>
            <person name="Ali J."/>
            <person name="Dante M."/>
            <person name="Du F."/>
            <person name="Hou S."/>
            <person name="Layman D."/>
            <person name="Leonard S."/>
            <person name="Nguyen C."/>
            <person name="Scott K."/>
            <person name="Holmes A."/>
            <person name="Grewal N."/>
            <person name="Mulvaney E."/>
            <person name="Ryan E."/>
            <person name="Sun H."/>
            <person name="Florea L."/>
            <person name="Miller W."/>
            <person name="Stoneking T."/>
            <person name="Nhan M."/>
            <person name="Waterston R."/>
            <person name="Wilson R.K."/>
        </authorList>
    </citation>
    <scope>NUCLEOTIDE SEQUENCE [LARGE SCALE GENOMIC DNA]</scope>
    <source>
        <strain>LT2 / SGSC1412 / ATCC 700720</strain>
    </source>
</reference>
<reference key="3">
    <citation type="journal article" date="1992" name="Gene">
        <title>Mutations in the araC gene of Salmonella typhimurium LT2 which affect both activator and auto-regulatory functions of the AraC protein.</title>
        <authorList>
            <person name="Clarke P."/>
            <person name="Lee J.-H."/>
            <person name="Burke K."/>
            <person name="Wilcox G."/>
        </authorList>
    </citation>
    <scope>MUTAGENESIS</scope>
    <source>
        <strain>LT2</strain>
    </source>
</reference>
<sequence length="281" mass="32070">MAETQNDPLLPGYSFNAHLVAGLTPIEANGYLDFFIDRPLGMKGYILNLTIRGEGVINNNGEQFVCRPGDILLFPPGEIHHYGRHPDASEWYHQWVYFRPRAYWQEWLTWPTIFAQTGFFRPDEARQPHFSELFGQIISAGQGEGRYSELLAINLLEQLLLRRMAVINESLHPPMDSRVRDACQYISDHLADSHFDIASVAQHVCLSPSRLSHLFRQQLGISVLSWREDQRISQAKLLLSTTRMPIATVGRNVGFDDQLYFSRVFKKCTGASPSEFRAGCE</sequence>
<gene>
    <name evidence="3" type="primary">araC</name>
    <name type="ordered locus">STM0104</name>
</gene>
<accession>P03022</accession>
<feature type="chain" id="PRO_0000194502" description="Arabinose operon regulatory protein">
    <location>
        <begin position="1"/>
        <end position="281"/>
    </location>
</feature>
<feature type="domain" description="HTH araC/xylS-type" evidence="2">
    <location>
        <begin position="180"/>
        <end position="279"/>
    </location>
</feature>
<feature type="DNA-binding region" description="H-T-H motif" evidence="2">
    <location>
        <begin position="198"/>
        <end position="219"/>
    </location>
</feature>
<feature type="DNA-binding region" description="H-T-H motif" evidence="2">
    <location>
        <begin position="246"/>
        <end position="269"/>
    </location>
</feature>
<feature type="binding site" evidence="1">
    <location>
        <position position="8"/>
    </location>
    <ligand>
        <name>alpha-L-arabinopyanose</name>
        <dbReference type="ChEBI" id="CHEBI:46987"/>
    </ligand>
</feature>
<feature type="binding site" evidence="1">
    <location>
        <position position="24"/>
    </location>
    <ligand>
        <name>alpha-L-arabinopyanose</name>
        <dbReference type="ChEBI" id="CHEBI:46987"/>
    </ligand>
</feature>
<feature type="binding site" evidence="1">
    <location>
        <position position="38"/>
    </location>
    <ligand>
        <name>alpha-L-arabinopyanose</name>
        <dbReference type="ChEBI" id="CHEBI:46987"/>
    </ligand>
</feature>
<feature type="binding site" evidence="1">
    <location>
        <position position="82"/>
    </location>
    <ligand>
        <name>alpha-L-arabinopyanose</name>
        <dbReference type="ChEBI" id="CHEBI:46987"/>
    </ligand>
</feature>
<feature type="binding site" evidence="1">
    <location>
        <position position="93"/>
    </location>
    <ligand>
        <name>alpha-L-arabinopyanose</name>
        <dbReference type="ChEBI" id="CHEBI:46987"/>
    </ligand>
</feature>
<proteinExistence type="inferred from homology"/>
<dbReference type="EMBL" id="J01797">
    <property type="protein sequence ID" value="AAA27026.1"/>
    <property type="molecule type" value="Genomic_DNA"/>
</dbReference>
<dbReference type="EMBL" id="AE006468">
    <property type="protein sequence ID" value="AAL19068.1"/>
    <property type="molecule type" value="Genomic_DNA"/>
</dbReference>
<dbReference type="PIR" id="A03555">
    <property type="entry name" value="RGEBAT"/>
</dbReference>
<dbReference type="RefSeq" id="NP_459109.1">
    <property type="nucleotide sequence ID" value="NC_003197.2"/>
</dbReference>
<dbReference type="RefSeq" id="WP_000852387.1">
    <property type="nucleotide sequence ID" value="NC_003197.2"/>
</dbReference>
<dbReference type="BMRB" id="P03022"/>
<dbReference type="SMR" id="P03022"/>
<dbReference type="STRING" id="99287.STM0104"/>
<dbReference type="PaxDb" id="99287-STM0104"/>
<dbReference type="GeneID" id="1251622"/>
<dbReference type="KEGG" id="stm:STM0104"/>
<dbReference type="PATRIC" id="fig|99287.12.peg.107"/>
<dbReference type="HOGENOM" id="CLU_000445_88_6_6"/>
<dbReference type="OMA" id="GFEDQLY"/>
<dbReference type="PhylomeDB" id="P03022"/>
<dbReference type="BioCyc" id="SENT99287:STM0104-MONOMER"/>
<dbReference type="Proteomes" id="UP000001014">
    <property type="component" value="Chromosome"/>
</dbReference>
<dbReference type="GO" id="GO:0005737">
    <property type="term" value="C:cytoplasm"/>
    <property type="evidence" value="ECO:0007669"/>
    <property type="project" value="UniProtKB-SubCell"/>
</dbReference>
<dbReference type="GO" id="GO:0003700">
    <property type="term" value="F:DNA-binding transcription factor activity"/>
    <property type="evidence" value="ECO:0007669"/>
    <property type="project" value="InterPro"/>
</dbReference>
<dbReference type="GO" id="GO:0043565">
    <property type="term" value="F:sequence-specific DNA binding"/>
    <property type="evidence" value="ECO:0007669"/>
    <property type="project" value="InterPro"/>
</dbReference>
<dbReference type="GO" id="GO:0019568">
    <property type="term" value="P:arabinose catabolic process"/>
    <property type="evidence" value="ECO:0007669"/>
    <property type="project" value="UniProtKB-KW"/>
</dbReference>
<dbReference type="CDD" id="cd06986">
    <property type="entry name" value="cupin_MmsR-like_N"/>
    <property type="match status" value="1"/>
</dbReference>
<dbReference type="FunFam" id="1.10.10.60:FF:000163">
    <property type="entry name" value="Arabinose operon transcriptional regulator"/>
    <property type="match status" value="1"/>
</dbReference>
<dbReference type="Gene3D" id="1.10.10.60">
    <property type="entry name" value="Homeodomain-like"/>
    <property type="match status" value="1"/>
</dbReference>
<dbReference type="Gene3D" id="2.60.120.280">
    <property type="entry name" value="Regulatory protein AraC"/>
    <property type="match status" value="1"/>
</dbReference>
<dbReference type="InterPro" id="IPR003313">
    <property type="entry name" value="AraC-bd"/>
</dbReference>
<dbReference type="InterPro" id="IPR009057">
    <property type="entry name" value="Homeodomain-like_sf"/>
</dbReference>
<dbReference type="InterPro" id="IPR037923">
    <property type="entry name" value="HTH-like"/>
</dbReference>
<dbReference type="InterPro" id="IPR018060">
    <property type="entry name" value="HTH_AraC"/>
</dbReference>
<dbReference type="InterPro" id="IPR018062">
    <property type="entry name" value="HTH_AraC-typ_CS"/>
</dbReference>
<dbReference type="InterPro" id="IPR020449">
    <property type="entry name" value="Tscrpt_reg_AraC-type_HTH"/>
</dbReference>
<dbReference type="NCBIfam" id="NF007860">
    <property type="entry name" value="PRK10572.1"/>
    <property type="match status" value="1"/>
</dbReference>
<dbReference type="PANTHER" id="PTHR43280:SF25">
    <property type="entry name" value="ARABINOSE OPERON REGULATORY PROTEIN"/>
    <property type="match status" value="1"/>
</dbReference>
<dbReference type="PANTHER" id="PTHR43280">
    <property type="entry name" value="ARAC-FAMILY TRANSCRIPTIONAL REGULATOR"/>
    <property type="match status" value="1"/>
</dbReference>
<dbReference type="Pfam" id="PF02311">
    <property type="entry name" value="AraC_binding"/>
    <property type="match status" value="1"/>
</dbReference>
<dbReference type="Pfam" id="PF12833">
    <property type="entry name" value="HTH_18"/>
    <property type="match status" value="1"/>
</dbReference>
<dbReference type="PRINTS" id="PR00032">
    <property type="entry name" value="HTHARAC"/>
</dbReference>
<dbReference type="SMART" id="SM00342">
    <property type="entry name" value="HTH_ARAC"/>
    <property type="match status" value="1"/>
</dbReference>
<dbReference type="SUPFAM" id="SSF46689">
    <property type="entry name" value="Homeodomain-like"/>
    <property type="match status" value="2"/>
</dbReference>
<dbReference type="SUPFAM" id="SSF51215">
    <property type="entry name" value="Regulatory protein AraC"/>
    <property type="match status" value="1"/>
</dbReference>
<dbReference type="PROSITE" id="PS00041">
    <property type="entry name" value="HTH_ARAC_FAMILY_1"/>
    <property type="match status" value="1"/>
</dbReference>
<dbReference type="PROSITE" id="PS01124">
    <property type="entry name" value="HTH_ARAC_FAMILY_2"/>
    <property type="match status" value="1"/>
</dbReference>